<gene>
    <name type="primary">HTB2</name>
    <name type="ORF">PGUG_00620</name>
</gene>
<feature type="initiator methionine" description="Removed" evidence="1">
    <location>
        <position position="1"/>
    </location>
</feature>
<feature type="chain" id="PRO_0000297853" description="Histone H2B.2">
    <location>
        <begin position="2"/>
        <end position="129"/>
    </location>
</feature>
<feature type="region of interest" description="Disordered" evidence="2">
    <location>
        <begin position="1"/>
        <end position="37"/>
    </location>
</feature>
<feature type="compositionally biased region" description="Basic and acidic residues" evidence="2">
    <location>
        <begin position="1"/>
        <end position="19"/>
    </location>
</feature>
<feature type="modified residue" description="N6-acetyllysine; alternate" evidence="1">
    <location>
        <position position="7"/>
    </location>
</feature>
<feature type="modified residue" description="N6-acetyllysine; alternate" evidence="1">
    <location>
        <position position="8"/>
    </location>
</feature>
<feature type="modified residue" description="Phosphoserine" evidence="1">
    <location>
        <position position="11"/>
    </location>
</feature>
<feature type="modified residue" description="N6-acetyllysine" evidence="1">
    <location>
        <position position="12"/>
    </location>
</feature>
<feature type="modified residue" description="N6-acetyllysine; alternate" evidence="1">
    <location>
        <position position="17"/>
    </location>
</feature>
<feature type="cross-link" description="Glycyl lysine isopeptide (Lys-Gly) (interchain with G-Cter in SUMO); alternate" evidence="1">
    <location>
        <position position="7"/>
    </location>
</feature>
<feature type="cross-link" description="Glycyl lysine isopeptide (Lys-Gly) (interchain with G-Cter in SUMO); alternate" evidence="1">
    <location>
        <position position="8"/>
    </location>
</feature>
<feature type="cross-link" description="Glycyl lysine isopeptide (Lys-Gly) (interchain with G-Cter in SUMO); alternate" evidence="1">
    <location>
        <position position="17"/>
    </location>
</feature>
<feature type="cross-link" description="Glycyl lysine isopeptide (Lys-Gly) (interchain with G-Cter in SUMO)" evidence="1">
    <location>
        <position position="18"/>
    </location>
</feature>
<feature type="cross-link" description="Glycyl lysine isopeptide (Lys-Gly) (interchain with G-Cter in ubiquitin)" evidence="1">
    <location>
        <position position="123"/>
    </location>
</feature>
<comment type="function">
    <text>Core component of nucleosome. Nucleosomes wrap and compact DNA into chromatin, limiting DNA accessibility to the cellular machineries which require DNA as a template. Histones thereby play a central role in transcription regulation, DNA repair, DNA replication and chromosomal stability. DNA accessibility is regulated via a complex set of post-translational modifications of histones, also called histone code, and nucleosome remodeling.</text>
</comment>
<comment type="subunit">
    <text>The nucleosome is a histone octamer containing two molecules each of H2A, H2B, H3 and H4 assembled in one H3-H4 heterotetramer and two H2A-H2B heterodimers. The octamer wraps approximately 147 bp of DNA.</text>
</comment>
<comment type="subcellular location">
    <subcellularLocation>
        <location evidence="1">Nucleus</location>
    </subcellularLocation>
    <subcellularLocation>
        <location evidence="1">Chromosome</location>
    </subcellularLocation>
</comment>
<comment type="PTM">
    <text evidence="1">Monoubiquitinated by the UBC2-BRE1 complex to form H2BK123ub1. H2BK123ub1 gives a specific tag for epigenetic transcriptional activation and is also prerequisite for H3K4me and H3K79me formation. H2BK123ub1 also modulates the formation of double-strand breaks during meiosis and is a prerequisite for DNA-damage checkpoint activation (By similarity).</text>
</comment>
<comment type="PTM">
    <text evidence="1">Phosphorylated by STE20 to form H2BS10ph during progression through meiotic prophase. May be correlated with chromosome condensation (By similarity).</text>
</comment>
<comment type="PTM">
    <text evidence="1">Acetylated by GCN5 to form H2BK11ac and H2BK16ac. H2BK16ac can also be formed by ESA1. Acetylation of N-terminal lysines and particularly formation of H2BK11acK16ac has a positive effect on transcription (By similarity).</text>
</comment>
<comment type="PTM">
    <text evidence="1">Sumoylation to form H2BK6su or H2BK7su, and probably also H2BK16su or H2BK17su, occurs preferentially near the telomeres and represses gene transcription.</text>
</comment>
<comment type="similarity">
    <text evidence="3">Belongs to the histone H2B family.</text>
</comment>
<comment type="caution">
    <text evidence="3">To ensure consistency between histone entries, we follow the 'Brno' nomenclature for histone modifications, with positions referring to those used in the literature for the 'closest' model organism. Due to slight variations in histone sequences between organisms and to the presence of initiator methionine in UniProtKB/Swiss-Prot sequences, the actual positions of modified amino acids in the sequence generally differ. In this entry the following conventions are used: H2BK6ac = acetylated Lys-7; H2BK6su = sumoylated Lys-7; H2BK7ac = acetylated Lys-8; H2BK7su = sumoylated Lys-8; H2BS10ph = phosphorylated Ser-11; H2BK11ac = acetylated Lys-12; H2BK16ac = acetylated Lys-17; H2BK16su = sumoylated Lys-17; H2BK17su = sumoylated Lys-18; H2BK123ub1 = monoubiquitinated Lys-123.</text>
</comment>
<keyword id="KW-0007">Acetylation</keyword>
<keyword id="KW-0158">Chromosome</keyword>
<keyword id="KW-0238">DNA-binding</keyword>
<keyword id="KW-1017">Isopeptide bond</keyword>
<keyword id="KW-0544">Nucleosome core</keyword>
<keyword id="KW-0539">Nucleus</keyword>
<keyword id="KW-0597">Phosphoprotein</keyword>
<keyword id="KW-1185">Reference proteome</keyword>
<keyword id="KW-0832">Ubl conjugation</keyword>
<accession>A5DBG5</accession>
<evidence type="ECO:0000250" key="1"/>
<evidence type="ECO:0000256" key="2">
    <source>
        <dbReference type="SAM" id="MobiDB-lite"/>
    </source>
</evidence>
<evidence type="ECO:0000305" key="3"/>
<dbReference type="EMBL" id="CH408155">
    <property type="protein sequence ID" value="EDK36522.1"/>
    <property type="molecule type" value="Genomic_DNA"/>
</dbReference>
<dbReference type="RefSeq" id="XP_001487243.1">
    <property type="nucleotide sequence ID" value="XM_001487193.1"/>
</dbReference>
<dbReference type="SMR" id="A5DBG5"/>
<dbReference type="FunCoup" id="A5DBG5">
    <property type="interactions" value="1114"/>
</dbReference>
<dbReference type="STRING" id="294746.A5DBG5"/>
<dbReference type="GeneID" id="5128824"/>
<dbReference type="KEGG" id="pgu:PGUG_00620"/>
<dbReference type="VEuPathDB" id="FungiDB:PGUG_00620"/>
<dbReference type="eggNOG" id="KOG1744">
    <property type="taxonomic scope" value="Eukaryota"/>
</dbReference>
<dbReference type="HOGENOM" id="CLU_075666_1_3_1"/>
<dbReference type="InParanoid" id="A5DBG5"/>
<dbReference type="OMA" id="AQLCQTT"/>
<dbReference type="OrthoDB" id="10254238at2759"/>
<dbReference type="Proteomes" id="UP000001997">
    <property type="component" value="Unassembled WGS sequence"/>
</dbReference>
<dbReference type="GO" id="GO:0000786">
    <property type="term" value="C:nucleosome"/>
    <property type="evidence" value="ECO:0007669"/>
    <property type="project" value="UniProtKB-KW"/>
</dbReference>
<dbReference type="GO" id="GO:0005634">
    <property type="term" value="C:nucleus"/>
    <property type="evidence" value="ECO:0007669"/>
    <property type="project" value="UniProtKB-SubCell"/>
</dbReference>
<dbReference type="GO" id="GO:0003677">
    <property type="term" value="F:DNA binding"/>
    <property type="evidence" value="ECO:0007669"/>
    <property type="project" value="UniProtKB-KW"/>
</dbReference>
<dbReference type="GO" id="GO:0046982">
    <property type="term" value="F:protein heterodimerization activity"/>
    <property type="evidence" value="ECO:0007669"/>
    <property type="project" value="InterPro"/>
</dbReference>
<dbReference type="GO" id="GO:0030527">
    <property type="term" value="F:structural constituent of chromatin"/>
    <property type="evidence" value="ECO:0007669"/>
    <property type="project" value="InterPro"/>
</dbReference>
<dbReference type="CDD" id="cd22910">
    <property type="entry name" value="HFD_H2B"/>
    <property type="match status" value="1"/>
</dbReference>
<dbReference type="FunFam" id="1.10.20.10:FF:000014">
    <property type="entry name" value="Histone H2B"/>
    <property type="match status" value="1"/>
</dbReference>
<dbReference type="Gene3D" id="1.10.20.10">
    <property type="entry name" value="Histone, subunit A"/>
    <property type="match status" value="1"/>
</dbReference>
<dbReference type="InterPro" id="IPR009072">
    <property type="entry name" value="Histone-fold"/>
</dbReference>
<dbReference type="InterPro" id="IPR007125">
    <property type="entry name" value="Histone_H2A/H2B/H3"/>
</dbReference>
<dbReference type="InterPro" id="IPR000558">
    <property type="entry name" value="Histone_H2B"/>
</dbReference>
<dbReference type="PANTHER" id="PTHR23428">
    <property type="entry name" value="HISTONE H2B"/>
    <property type="match status" value="1"/>
</dbReference>
<dbReference type="Pfam" id="PF00125">
    <property type="entry name" value="Histone"/>
    <property type="match status" value="1"/>
</dbReference>
<dbReference type="PRINTS" id="PR00621">
    <property type="entry name" value="HISTONEH2B"/>
</dbReference>
<dbReference type="SMART" id="SM00427">
    <property type="entry name" value="H2B"/>
    <property type="match status" value="1"/>
</dbReference>
<dbReference type="SUPFAM" id="SSF47113">
    <property type="entry name" value="Histone-fold"/>
    <property type="match status" value="1"/>
</dbReference>
<organism>
    <name type="scientific">Meyerozyma guilliermondii (strain ATCC 6260 / CBS 566 / DSM 6381 / JCM 1539 / NBRC 10279 / NRRL Y-324)</name>
    <name type="common">Yeast</name>
    <name type="synonym">Candida guilliermondii</name>
    <dbReference type="NCBI Taxonomy" id="294746"/>
    <lineage>
        <taxon>Eukaryota</taxon>
        <taxon>Fungi</taxon>
        <taxon>Dikarya</taxon>
        <taxon>Ascomycota</taxon>
        <taxon>Saccharomycotina</taxon>
        <taxon>Pichiomycetes</taxon>
        <taxon>Debaryomycetaceae</taxon>
        <taxon>Meyerozyma</taxon>
    </lineage>
</organism>
<proteinExistence type="inferred from homology"/>
<name>H2B2_PICGU</name>
<reference key="1">
    <citation type="journal article" date="2009" name="Nature">
        <title>Evolution of pathogenicity and sexual reproduction in eight Candida genomes.</title>
        <authorList>
            <person name="Butler G."/>
            <person name="Rasmussen M.D."/>
            <person name="Lin M.F."/>
            <person name="Santos M.A.S."/>
            <person name="Sakthikumar S."/>
            <person name="Munro C.A."/>
            <person name="Rheinbay E."/>
            <person name="Grabherr M."/>
            <person name="Forche A."/>
            <person name="Reedy J.L."/>
            <person name="Agrafioti I."/>
            <person name="Arnaud M.B."/>
            <person name="Bates S."/>
            <person name="Brown A.J.P."/>
            <person name="Brunke S."/>
            <person name="Costanzo M.C."/>
            <person name="Fitzpatrick D.A."/>
            <person name="de Groot P.W.J."/>
            <person name="Harris D."/>
            <person name="Hoyer L.L."/>
            <person name="Hube B."/>
            <person name="Klis F.M."/>
            <person name="Kodira C."/>
            <person name="Lennard N."/>
            <person name="Logue M.E."/>
            <person name="Martin R."/>
            <person name="Neiman A.M."/>
            <person name="Nikolaou E."/>
            <person name="Quail M.A."/>
            <person name="Quinn J."/>
            <person name="Santos M.C."/>
            <person name="Schmitzberger F.F."/>
            <person name="Sherlock G."/>
            <person name="Shah P."/>
            <person name="Silverstein K.A.T."/>
            <person name="Skrzypek M.S."/>
            <person name="Soll D."/>
            <person name="Staggs R."/>
            <person name="Stansfield I."/>
            <person name="Stumpf M.P.H."/>
            <person name="Sudbery P.E."/>
            <person name="Srikantha T."/>
            <person name="Zeng Q."/>
            <person name="Berman J."/>
            <person name="Berriman M."/>
            <person name="Heitman J."/>
            <person name="Gow N.A.R."/>
            <person name="Lorenz M.C."/>
            <person name="Birren B.W."/>
            <person name="Kellis M."/>
            <person name="Cuomo C.A."/>
        </authorList>
    </citation>
    <scope>NUCLEOTIDE SEQUENCE [LARGE SCALE GENOMIC DNA]</scope>
    <source>
        <strain>ATCC 6260 / CBS 566 / DSM 6381 / JCM 1539 / NBRC 10279 / NRRL Y-324</strain>
    </source>
</reference>
<sequence>MAPKAEKKPASKAPAEKKPAAKKTASSDSKKRTKTRKETYSSYIYKVLKQTHPDTGISQKAMSIMNSFVNDIFERVASEASKLAAYNKKSTISAREIQTAVRLILPGELAKHAVSEATRTITKYSSAAN</sequence>
<protein>
    <recommendedName>
        <fullName>Histone H2B.2</fullName>
    </recommendedName>
</protein>